<proteinExistence type="inferred from homology"/>
<comment type="similarity">
    <text evidence="1">Belongs to the bacterial ribosomal protein bL35 family.</text>
</comment>
<name>RL35_CAMC1</name>
<reference key="1">
    <citation type="submission" date="2007-10" db="EMBL/GenBank/DDBJ databases">
        <title>Genome sequence of Campylobacter concisus 13826 isolated from human feces.</title>
        <authorList>
            <person name="Fouts D.E."/>
            <person name="Mongodin E.F."/>
            <person name="Puiu D."/>
            <person name="Sebastian Y."/>
            <person name="Miller W.G."/>
            <person name="Mandrell R.E."/>
            <person name="On S."/>
            <person name="Nelson K.E."/>
        </authorList>
    </citation>
    <scope>NUCLEOTIDE SEQUENCE [LARGE SCALE GENOMIC DNA]</scope>
    <source>
        <strain>13826</strain>
    </source>
</reference>
<keyword id="KW-0687">Ribonucleoprotein</keyword>
<keyword id="KW-0689">Ribosomal protein</keyword>
<accession>A7ZAY1</accession>
<protein>
    <recommendedName>
        <fullName evidence="1">Large ribosomal subunit protein bL35</fullName>
    </recommendedName>
    <alternativeName>
        <fullName evidence="2">50S ribosomal protein L35</fullName>
    </alternativeName>
</protein>
<evidence type="ECO:0000255" key="1">
    <source>
        <dbReference type="HAMAP-Rule" id="MF_00514"/>
    </source>
</evidence>
<evidence type="ECO:0000305" key="2"/>
<organism>
    <name type="scientific">Campylobacter concisus (strain 13826)</name>
    <dbReference type="NCBI Taxonomy" id="360104"/>
    <lineage>
        <taxon>Bacteria</taxon>
        <taxon>Pseudomonadati</taxon>
        <taxon>Campylobacterota</taxon>
        <taxon>Epsilonproteobacteria</taxon>
        <taxon>Campylobacterales</taxon>
        <taxon>Campylobacteraceae</taxon>
        <taxon>Campylobacter</taxon>
    </lineage>
</organism>
<feature type="chain" id="PRO_1000050672" description="Large ribosomal subunit protein bL35">
    <location>
        <begin position="1"/>
        <end position="63"/>
    </location>
</feature>
<gene>
    <name evidence="1" type="primary">rpmI</name>
    <name type="ordered locus">Ccon26_00150</name>
    <name type="ORF">CCC13826_1839</name>
</gene>
<sequence>MPKMKTVRGAAKRFKVGKNKIKRGSAFRSHILTKKPSKRMRDLRGPQYVDSTNVPAVRKMLGV</sequence>
<dbReference type="EMBL" id="CP000792">
    <property type="protein sequence ID" value="EAT99168.1"/>
    <property type="molecule type" value="Genomic_DNA"/>
</dbReference>
<dbReference type="RefSeq" id="WP_012000969.1">
    <property type="nucleotide sequence ID" value="NC_009802.2"/>
</dbReference>
<dbReference type="SMR" id="A7ZAY1"/>
<dbReference type="STRING" id="360104.CCC13826_1839"/>
<dbReference type="KEGG" id="cco:CCC13826_1839"/>
<dbReference type="eggNOG" id="COG0291">
    <property type="taxonomic scope" value="Bacteria"/>
</dbReference>
<dbReference type="HOGENOM" id="CLU_169643_1_2_7"/>
<dbReference type="OrthoDB" id="9804851at2"/>
<dbReference type="Proteomes" id="UP000001121">
    <property type="component" value="Chromosome"/>
</dbReference>
<dbReference type="GO" id="GO:0022625">
    <property type="term" value="C:cytosolic large ribosomal subunit"/>
    <property type="evidence" value="ECO:0007669"/>
    <property type="project" value="TreeGrafter"/>
</dbReference>
<dbReference type="GO" id="GO:0003735">
    <property type="term" value="F:structural constituent of ribosome"/>
    <property type="evidence" value="ECO:0007669"/>
    <property type="project" value="InterPro"/>
</dbReference>
<dbReference type="GO" id="GO:0006412">
    <property type="term" value="P:translation"/>
    <property type="evidence" value="ECO:0007669"/>
    <property type="project" value="UniProtKB-UniRule"/>
</dbReference>
<dbReference type="FunFam" id="4.10.410.60:FF:000001">
    <property type="entry name" value="50S ribosomal protein L35"/>
    <property type="match status" value="1"/>
</dbReference>
<dbReference type="Gene3D" id="4.10.410.60">
    <property type="match status" value="1"/>
</dbReference>
<dbReference type="HAMAP" id="MF_00514">
    <property type="entry name" value="Ribosomal_bL35"/>
    <property type="match status" value="1"/>
</dbReference>
<dbReference type="InterPro" id="IPR001706">
    <property type="entry name" value="Ribosomal_bL35"/>
</dbReference>
<dbReference type="InterPro" id="IPR021137">
    <property type="entry name" value="Ribosomal_bL35-like"/>
</dbReference>
<dbReference type="InterPro" id="IPR018265">
    <property type="entry name" value="Ribosomal_bL35_CS"/>
</dbReference>
<dbReference type="InterPro" id="IPR037229">
    <property type="entry name" value="Ribosomal_bL35_sf"/>
</dbReference>
<dbReference type="NCBIfam" id="TIGR00001">
    <property type="entry name" value="rpmI_bact"/>
    <property type="match status" value="1"/>
</dbReference>
<dbReference type="PANTHER" id="PTHR33343">
    <property type="entry name" value="54S RIBOSOMAL PROTEIN BL35M"/>
    <property type="match status" value="1"/>
</dbReference>
<dbReference type="PANTHER" id="PTHR33343:SF1">
    <property type="entry name" value="LARGE RIBOSOMAL SUBUNIT PROTEIN BL35M"/>
    <property type="match status" value="1"/>
</dbReference>
<dbReference type="Pfam" id="PF01632">
    <property type="entry name" value="Ribosomal_L35p"/>
    <property type="match status" value="1"/>
</dbReference>
<dbReference type="PRINTS" id="PR00064">
    <property type="entry name" value="RIBOSOMALL35"/>
</dbReference>
<dbReference type="SUPFAM" id="SSF143034">
    <property type="entry name" value="L35p-like"/>
    <property type="match status" value="1"/>
</dbReference>
<dbReference type="PROSITE" id="PS00936">
    <property type="entry name" value="RIBOSOMAL_L35"/>
    <property type="match status" value="1"/>
</dbReference>